<comment type="function">
    <text evidence="1">Essential cell division protein that forms a contractile ring structure (Z ring) at the future cell division site. The regulation of the ring assembly controls the timing and the location of cell division. One of the functions of the FtsZ ring is to recruit other cell division proteins to the septum to produce a new cell wall between the dividing cells. Binds GTP and shows GTPase activity.</text>
</comment>
<comment type="subunit">
    <text evidence="1">Homodimer. Polymerizes to form a dynamic ring structure in a strictly GTP-dependent manner. Interacts directly with several other division proteins.</text>
</comment>
<comment type="interaction">
    <interactant intactId="EBI-9351832">
        <id>Q6GHP9</id>
    </interactant>
    <interactant intactId="EBI-9351810">
        <id>Q6GHQ0</id>
        <label>ftsA</label>
    </interactant>
    <organismsDiffer>false</organismsDiffer>
    <experiments>2</experiments>
</comment>
<comment type="subcellular location">
    <subcellularLocation>
        <location evidence="1">Cytoplasm</location>
    </subcellularLocation>
    <text evidence="1">Assembles at midcell at the inner surface of the cytoplasmic membrane.</text>
</comment>
<comment type="similarity">
    <text evidence="1">Belongs to the FtsZ family.</text>
</comment>
<feature type="chain" id="PRO_0000114382" description="Cell division protein FtsZ">
    <location>
        <begin position="1"/>
        <end position="390"/>
    </location>
</feature>
<feature type="region of interest" description="Disordered" evidence="2">
    <location>
        <begin position="315"/>
        <end position="390"/>
    </location>
</feature>
<feature type="compositionally biased region" description="Polar residues" evidence="2">
    <location>
        <begin position="326"/>
        <end position="360"/>
    </location>
</feature>
<feature type="compositionally biased region" description="Basic and acidic residues" evidence="2">
    <location>
        <begin position="361"/>
        <end position="384"/>
    </location>
</feature>
<feature type="binding site" evidence="1">
    <location>
        <begin position="21"/>
        <end position="25"/>
    </location>
    <ligand>
        <name>GTP</name>
        <dbReference type="ChEBI" id="CHEBI:37565"/>
    </ligand>
</feature>
<feature type="binding site" evidence="1">
    <location>
        <begin position="108"/>
        <end position="110"/>
    </location>
    <ligand>
        <name>GTP</name>
        <dbReference type="ChEBI" id="CHEBI:37565"/>
    </ligand>
</feature>
<feature type="binding site" evidence="1">
    <location>
        <position position="139"/>
    </location>
    <ligand>
        <name>GTP</name>
        <dbReference type="ChEBI" id="CHEBI:37565"/>
    </ligand>
</feature>
<feature type="binding site" evidence="1">
    <location>
        <position position="143"/>
    </location>
    <ligand>
        <name>GTP</name>
        <dbReference type="ChEBI" id="CHEBI:37565"/>
    </ligand>
</feature>
<feature type="binding site" evidence="1">
    <location>
        <position position="187"/>
    </location>
    <ligand>
        <name>GTP</name>
        <dbReference type="ChEBI" id="CHEBI:37565"/>
    </ligand>
</feature>
<organism>
    <name type="scientific">Staphylococcus aureus (strain MRSA252)</name>
    <dbReference type="NCBI Taxonomy" id="282458"/>
    <lineage>
        <taxon>Bacteria</taxon>
        <taxon>Bacillati</taxon>
        <taxon>Bacillota</taxon>
        <taxon>Bacilli</taxon>
        <taxon>Bacillales</taxon>
        <taxon>Staphylococcaceae</taxon>
        <taxon>Staphylococcus</taxon>
    </lineage>
</organism>
<name>FTSZ_STAAR</name>
<evidence type="ECO:0000255" key="1">
    <source>
        <dbReference type="HAMAP-Rule" id="MF_00909"/>
    </source>
</evidence>
<evidence type="ECO:0000256" key="2">
    <source>
        <dbReference type="SAM" id="MobiDB-lite"/>
    </source>
</evidence>
<protein>
    <recommendedName>
        <fullName evidence="1">Cell division protein FtsZ</fullName>
    </recommendedName>
</protein>
<reference key="1">
    <citation type="journal article" date="2004" name="Proc. Natl. Acad. Sci. U.S.A.">
        <title>Complete genomes of two clinical Staphylococcus aureus strains: evidence for the rapid evolution of virulence and drug resistance.</title>
        <authorList>
            <person name="Holden M.T.G."/>
            <person name="Feil E.J."/>
            <person name="Lindsay J.A."/>
            <person name="Peacock S.J."/>
            <person name="Day N.P.J."/>
            <person name="Enright M.C."/>
            <person name="Foster T.J."/>
            <person name="Moore C.E."/>
            <person name="Hurst L."/>
            <person name="Atkin R."/>
            <person name="Barron A."/>
            <person name="Bason N."/>
            <person name="Bentley S.D."/>
            <person name="Chillingworth C."/>
            <person name="Chillingworth T."/>
            <person name="Churcher C."/>
            <person name="Clark L."/>
            <person name="Corton C."/>
            <person name="Cronin A."/>
            <person name="Doggett J."/>
            <person name="Dowd L."/>
            <person name="Feltwell T."/>
            <person name="Hance Z."/>
            <person name="Harris B."/>
            <person name="Hauser H."/>
            <person name="Holroyd S."/>
            <person name="Jagels K."/>
            <person name="James K.D."/>
            <person name="Lennard N."/>
            <person name="Line A."/>
            <person name="Mayes R."/>
            <person name="Moule S."/>
            <person name="Mungall K."/>
            <person name="Ormond D."/>
            <person name="Quail M.A."/>
            <person name="Rabbinowitsch E."/>
            <person name="Rutherford K.M."/>
            <person name="Sanders M."/>
            <person name="Sharp S."/>
            <person name="Simmonds M."/>
            <person name="Stevens K."/>
            <person name="Whitehead S."/>
            <person name="Barrell B.G."/>
            <person name="Spratt B.G."/>
            <person name="Parkhill J."/>
        </authorList>
    </citation>
    <scope>NUCLEOTIDE SEQUENCE [LARGE SCALE GENOMIC DNA]</scope>
    <source>
        <strain>MRSA252</strain>
    </source>
</reference>
<sequence>MLEFEQGFNHLATLKVIGVGGGGNNAVNRMIDHGMNNVEFIAINTDGQALNLSKAESKIQIGEKLTRGLGAGANPEIGKKAAEESREQIEDAIQGADMVFVTSGMGGGTGTGAAPVVAKIAKEMGALTVGVVTRPFSFEGRKRQTQAAAGVEAMKAAVDTLIVIPNDRLLDIVDKSTPMMEAFKEADNVLRQGVQGISDLIAVSGEVNLDFADVKTIMSNQGSALMGIGVSSGENRAVEAAKKAISSPLLETSIVGAQGVLMNITGGESLSLFEAQEAADIVQDAADEDVNMIFGTVINPELQDEIVVTVIATGFDDKPTSHGRKSGSTGFGTSVNTSSNATSKDESFTSNSSNAQATDSVSERTHTTKEDDIPSFIRNREERRSRRTRR</sequence>
<keyword id="KW-0002">3D-structure</keyword>
<keyword id="KW-0131">Cell cycle</keyword>
<keyword id="KW-0132">Cell division</keyword>
<keyword id="KW-0963">Cytoplasm</keyword>
<keyword id="KW-0342">GTP-binding</keyword>
<keyword id="KW-0547">Nucleotide-binding</keyword>
<keyword id="KW-0717">Septation</keyword>
<gene>
    <name evidence="1" type="primary">ftsZ</name>
    <name type="ordered locus">SAR1162</name>
</gene>
<dbReference type="EMBL" id="BX571856">
    <property type="protein sequence ID" value="CAG40164.1"/>
    <property type="molecule type" value="Genomic_DNA"/>
</dbReference>
<dbReference type="RefSeq" id="WP_000888997.1">
    <property type="nucleotide sequence ID" value="NC_002952.2"/>
</dbReference>
<dbReference type="PDB" id="8HTB">
    <property type="method" value="X-ray"/>
    <property type="resolution" value="1.30 A"/>
    <property type="chains" value="A=12-316"/>
</dbReference>
<dbReference type="PDBsum" id="8HTB"/>
<dbReference type="SMR" id="Q6GHP9"/>
<dbReference type="IntAct" id="Q6GHP9">
    <property type="interactions" value="1"/>
</dbReference>
<dbReference type="MINT" id="Q6GHP9"/>
<dbReference type="GeneID" id="98345502"/>
<dbReference type="KEGG" id="sar:SAR1162"/>
<dbReference type="HOGENOM" id="CLU_024865_0_1_9"/>
<dbReference type="Proteomes" id="UP000000596">
    <property type="component" value="Chromosome"/>
</dbReference>
<dbReference type="GO" id="GO:0032153">
    <property type="term" value="C:cell division site"/>
    <property type="evidence" value="ECO:0007669"/>
    <property type="project" value="UniProtKB-UniRule"/>
</dbReference>
<dbReference type="GO" id="GO:0005737">
    <property type="term" value="C:cytoplasm"/>
    <property type="evidence" value="ECO:0007669"/>
    <property type="project" value="UniProtKB-SubCell"/>
</dbReference>
<dbReference type="GO" id="GO:0005525">
    <property type="term" value="F:GTP binding"/>
    <property type="evidence" value="ECO:0007669"/>
    <property type="project" value="UniProtKB-UniRule"/>
</dbReference>
<dbReference type="GO" id="GO:0003924">
    <property type="term" value="F:GTPase activity"/>
    <property type="evidence" value="ECO:0007669"/>
    <property type="project" value="UniProtKB-UniRule"/>
</dbReference>
<dbReference type="GO" id="GO:0000917">
    <property type="term" value="P:division septum assembly"/>
    <property type="evidence" value="ECO:0007669"/>
    <property type="project" value="UniProtKB-KW"/>
</dbReference>
<dbReference type="GO" id="GO:0043093">
    <property type="term" value="P:FtsZ-dependent cytokinesis"/>
    <property type="evidence" value="ECO:0007669"/>
    <property type="project" value="UniProtKB-UniRule"/>
</dbReference>
<dbReference type="GO" id="GO:0051258">
    <property type="term" value="P:protein polymerization"/>
    <property type="evidence" value="ECO:0007669"/>
    <property type="project" value="UniProtKB-UniRule"/>
</dbReference>
<dbReference type="CDD" id="cd02201">
    <property type="entry name" value="FtsZ_type1"/>
    <property type="match status" value="1"/>
</dbReference>
<dbReference type="FunFam" id="3.30.1330.20:FF:000005">
    <property type="entry name" value="Cell division protein FtsZ"/>
    <property type="match status" value="1"/>
</dbReference>
<dbReference type="FunFam" id="3.40.50.1440:FF:000023">
    <property type="entry name" value="Cell division protein FtsZ"/>
    <property type="match status" value="1"/>
</dbReference>
<dbReference type="Gene3D" id="3.30.1330.20">
    <property type="entry name" value="Tubulin/FtsZ, C-terminal domain"/>
    <property type="match status" value="1"/>
</dbReference>
<dbReference type="Gene3D" id="3.40.50.1440">
    <property type="entry name" value="Tubulin/FtsZ, GTPase domain"/>
    <property type="match status" value="1"/>
</dbReference>
<dbReference type="HAMAP" id="MF_00909">
    <property type="entry name" value="FtsZ"/>
    <property type="match status" value="1"/>
</dbReference>
<dbReference type="InterPro" id="IPR000158">
    <property type="entry name" value="Cell_div_FtsZ"/>
</dbReference>
<dbReference type="InterPro" id="IPR020805">
    <property type="entry name" value="Cell_div_FtsZ_CS"/>
</dbReference>
<dbReference type="InterPro" id="IPR045061">
    <property type="entry name" value="FtsZ/CetZ"/>
</dbReference>
<dbReference type="InterPro" id="IPR024757">
    <property type="entry name" value="FtsZ_C"/>
</dbReference>
<dbReference type="InterPro" id="IPR008280">
    <property type="entry name" value="Tub_FtsZ_C"/>
</dbReference>
<dbReference type="InterPro" id="IPR037103">
    <property type="entry name" value="Tubulin/FtsZ-like_C"/>
</dbReference>
<dbReference type="InterPro" id="IPR018316">
    <property type="entry name" value="Tubulin/FtsZ_2-layer-sand-dom"/>
</dbReference>
<dbReference type="InterPro" id="IPR036525">
    <property type="entry name" value="Tubulin/FtsZ_GTPase_sf"/>
</dbReference>
<dbReference type="InterPro" id="IPR003008">
    <property type="entry name" value="Tubulin_FtsZ_GTPase"/>
</dbReference>
<dbReference type="NCBIfam" id="TIGR00065">
    <property type="entry name" value="ftsZ"/>
    <property type="match status" value="1"/>
</dbReference>
<dbReference type="PANTHER" id="PTHR30314">
    <property type="entry name" value="CELL DIVISION PROTEIN FTSZ-RELATED"/>
    <property type="match status" value="1"/>
</dbReference>
<dbReference type="PANTHER" id="PTHR30314:SF3">
    <property type="entry name" value="MITOCHONDRIAL DIVISION PROTEIN FSZA"/>
    <property type="match status" value="1"/>
</dbReference>
<dbReference type="Pfam" id="PF12327">
    <property type="entry name" value="FtsZ_C"/>
    <property type="match status" value="1"/>
</dbReference>
<dbReference type="Pfam" id="PF00091">
    <property type="entry name" value="Tubulin"/>
    <property type="match status" value="1"/>
</dbReference>
<dbReference type="PRINTS" id="PR00423">
    <property type="entry name" value="CELLDVISFTSZ"/>
</dbReference>
<dbReference type="SMART" id="SM00864">
    <property type="entry name" value="Tubulin"/>
    <property type="match status" value="1"/>
</dbReference>
<dbReference type="SMART" id="SM00865">
    <property type="entry name" value="Tubulin_C"/>
    <property type="match status" value="1"/>
</dbReference>
<dbReference type="SUPFAM" id="SSF55307">
    <property type="entry name" value="Tubulin C-terminal domain-like"/>
    <property type="match status" value="1"/>
</dbReference>
<dbReference type="SUPFAM" id="SSF52490">
    <property type="entry name" value="Tubulin nucleotide-binding domain-like"/>
    <property type="match status" value="1"/>
</dbReference>
<dbReference type="PROSITE" id="PS01134">
    <property type="entry name" value="FTSZ_1"/>
    <property type="match status" value="1"/>
</dbReference>
<dbReference type="PROSITE" id="PS01135">
    <property type="entry name" value="FTSZ_2"/>
    <property type="match status" value="1"/>
</dbReference>
<accession>Q6GHP9</accession>
<proteinExistence type="evidence at protein level"/>